<name>TRM11_RAT</name>
<reference key="1">
    <citation type="submission" date="2002-07" db="EMBL/GenBank/DDBJ databases">
        <title>Molecular identification and conserved evolution of a novel RNA methylase protein gene in higher eukaryotic organisms.</title>
        <authorList>
            <person name="Chen Y."/>
            <person name="Huang C.-H."/>
        </authorList>
    </citation>
    <scope>NUCLEOTIDE SEQUENCE [MRNA]</scope>
</reference>
<keyword id="KW-0007">Acetylation</keyword>
<keyword id="KW-0963">Cytoplasm</keyword>
<keyword id="KW-0489">Methyltransferase</keyword>
<keyword id="KW-1185">Reference proteome</keyword>
<keyword id="KW-0694">RNA-binding</keyword>
<keyword id="KW-0949">S-adenosyl-L-methionine</keyword>
<keyword id="KW-0808">Transferase</keyword>
<keyword id="KW-0819">tRNA processing</keyword>
<keyword id="KW-0820">tRNA-binding</keyword>
<dbReference type="EC" id="2.1.1.214" evidence="1"/>
<dbReference type="EMBL" id="AF532978">
    <property type="protein sequence ID" value="AAQ10285.1"/>
    <property type="molecule type" value="mRNA"/>
</dbReference>
<dbReference type="RefSeq" id="NP_932168.1">
    <property type="nucleotide sequence ID" value="NM_198051.1"/>
</dbReference>
<dbReference type="SMR" id="Q7TNK6"/>
<dbReference type="FunCoup" id="Q7TNK6">
    <property type="interactions" value="1686"/>
</dbReference>
<dbReference type="STRING" id="10116.ENSRNOP00000069979"/>
<dbReference type="iPTMnet" id="Q7TNK6"/>
<dbReference type="PhosphoSitePlus" id="Q7TNK6"/>
<dbReference type="PaxDb" id="10116-ENSRNOP00000019436"/>
<dbReference type="GeneID" id="378794"/>
<dbReference type="KEGG" id="rno:378794"/>
<dbReference type="UCSC" id="RGD:727798">
    <property type="organism name" value="rat"/>
</dbReference>
<dbReference type="AGR" id="RGD:727798"/>
<dbReference type="CTD" id="60487"/>
<dbReference type="RGD" id="727798">
    <property type="gene designation" value="Trmt11"/>
</dbReference>
<dbReference type="eggNOG" id="KOG2671">
    <property type="taxonomic scope" value="Eukaryota"/>
</dbReference>
<dbReference type="InParanoid" id="Q7TNK6"/>
<dbReference type="PhylomeDB" id="Q7TNK6"/>
<dbReference type="PRO" id="PR:Q7TNK6"/>
<dbReference type="Proteomes" id="UP000002494">
    <property type="component" value="Unplaced"/>
</dbReference>
<dbReference type="GO" id="GO:0005737">
    <property type="term" value="C:cytoplasm"/>
    <property type="evidence" value="ECO:0000250"/>
    <property type="project" value="UniProtKB"/>
</dbReference>
<dbReference type="GO" id="GO:0043528">
    <property type="term" value="C:tRNA (m2G10) methyltransferase complex"/>
    <property type="evidence" value="ECO:0000250"/>
    <property type="project" value="UniProtKB"/>
</dbReference>
<dbReference type="GO" id="GO:0008168">
    <property type="term" value="F:methyltransferase activity"/>
    <property type="evidence" value="ECO:0000318"/>
    <property type="project" value="GO_Central"/>
</dbReference>
<dbReference type="GO" id="GO:0160102">
    <property type="term" value="F:tRNA (guanine(10)-N2)-methyltransferase activity"/>
    <property type="evidence" value="ECO:0000250"/>
    <property type="project" value="UniProtKB"/>
</dbReference>
<dbReference type="GO" id="GO:0000049">
    <property type="term" value="F:tRNA binding"/>
    <property type="evidence" value="ECO:0007669"/>
    <property type="project" value="UniProtKB-KW"/>
</dbReference>
<dbReference type="GO" id="GO:0032259">
    <property type="term" value="P:methylation"/>
    <property type="evidence" value="ECO:0007669"/>
    <property type="project" value="UniProtKB-KW"/>
</dbReference>
<dbReference type="GO" id="GO:0008033">
    <property type="term" value="P:tRNA processing"/>
    <property type="evidence" value="ECO:0007669"/>
    <property type="project" value="UniProtKB-KW"/>
</dbReference>
<dbReference type="CDD" id="cd02440">
    <property type="entry name" value="AdoMet_MTases"/>
    <property type="match status" value="1"/>
</dbReference>
<dbReference type="FunFam" id="3.40.50.150:FF:000069">
    <property type="entry name" value="tRNA (Guanine(10)-N2)-methyltransferase homolog isoform X2"/>
    <property type="match status" value="1"/>
</dbReference>
<dbReference type="Gene3D" id="3.40.50.150">
    <property type="entry name" value="Vaccinia Virus protein VP39"/>
    <property type="match status" value="1"/>
</dbReference>
<dbReference type="InterPro" id="IPR002052">
    <property type="entry name" value="DNA_methylase_N6_adenine_CS"/>
</dbReference>
<dbReference type="InterPro" id="IPR000241">
    <property type="entry name" value="RlmKL-like_Mtase"/>
</dbReference>
<dbReference type="InterPro" id="IPR029063">
    <property type="entry name" value="SAM-dependent_MTases_sf"/>
</dbReference>
<dbReference type="InterPro" id="IPR016691">
    <property type="entry name" value="tRNA_mtfrase_TRM11"/>
</dbReference>
<dbReference type="PANTHER" id="PTHR13370">
    <property type="entry name" value="RNA METHYLASE-RELATED"/>
    <property type="match status" value="1"/>
</dbReference>
<dbReference type="PANTHER" id="PTHR13370:SF3">
    <property type="entry name" value="TRNA (GUANINE(10)-N2)-METHYLTRANSFERASE HOMOLOG"/>
    <property type="match status" value="1"/>
</dbReference>
<dbReference type="Pfam" id="PF01170">
    <property type="entry name" value="UPF0020"/>
    <property type="match status" value="1"/>
</dbReference>
<dbReference type="PIRSF" id="PIRSF017259">
    <property type="entry name" value="tRNA_mtfrase_TRM11"/>
    <property type="match status" value="1"/>
</dbReference>
<dbReference type="PRINTS" id="PR00507">
    <property type="entry name" value="N12N6MTFRASE"/>
</dbReference>
<dbReference type="SUPFAM" id="SSF53335">
    <property type="entry name" value="S-adenosyl-L-methionine-dependent methyltransferases"/>
    <property type="match status" value="1"/>
</dbReference>
<dbReference type="PROSITE" id="PS00092">
    <property type="entry name" value="N6_MTASE"/>
    <property type="match status" value="1"/>
</dbReference>
<dbReference type="PROSITE" id="PS51627">
    <property type="entry name" value="SAM_MT_TRM11"/>
    <property type="match status" value="1"/>
</dbReference>
<comment type="function">
    <text evidence="1">Catalytic subunit of the TRMT11-TRM112 methyltransferase complex, that specifically mediates the S-adenosyl-L-methionine-dependent N(2)-methylation of guanosine nucleotide at position 10 (m2G10) in tRNAs. This is one of the major tRNA (guanine-N(2))-methyltransferases.</text>
</comment>
<comment type="catalytic activity">
    <reaction evidence="1">
        <text>guanosine(10) in tRNA + S-adenosyl-L-methionine = N(2)-methylguanosine(10) in tRNA + S-adenosyl-L-homocysteine + H(+)</text>
        <dbReference type="Rhea" id="RHEA:43128"/>
        <dbReference type="Rhea" id="RHEA-COMP:10355"/>
        <dbReference type="Rhea" id="RHEA-COMP:10357"/>
        <dbReference type="ChEBI" id="CHEBI:15378"/>
        <dbReference type="ChEBI" id="CHEBI:57856"/>
        <dbReference type="ChEBI" id="CHEBI:59789"/>
        <dbReference type="ChEBI" id="CHEBI:74269"/>
        <dbReference type="ChEBI" id="CHEBI:74481"/>
        <dbReference type="EC" id="2.1.1.214"/>
    </reaction>
    <physiologicalReaction direction="left-to-right" evidence="1">
        <dbReference type="Rhea" id="RHEA:43129"/>
    </physiologicalReaction>
</comment>
<comment type="subunit">
    <text evidence="1">Part of the heterodimeric TRMT11-TRM112 methyltransferase complex; this complex forms an active tRNA methyltransferase, where TRMT112 acts as an activator of the catalytic subunit TRMT11.</text>
</comment>
<comment type="subcellular location">
    <subcellularLocation>
        <location evidence="1">Cytoplasm</location>
    </subcellularLocation>
</comment>
<comment type="similarity">
    <text evidence="2">Belongs to the class I-like SAM-binding methyltransferase superfamily. TRM11 methyltransferase family.</text>
</comment>
<sequence length="463" mass="53103">MALPGSLNRYLLLMAQEHLEFRLPEIKSLLSVIGGQFTNSQETYGKSPFWILNIPSEDIARNLMKRTVCAKSLFELWGHGKSPEELYSSLKSYPVEKMVPFLHSDSTYKIKIHTFNKTLTQEEKVKRIDALEFLPFEGKVNLKKPQHVFSILEDYGLDPNCIPENPHNIYFGRWIADGQRELIESYSVKKRHFIGNTSMDAGLSFIMANHAKVKENDLVFDPFVGTGGLLIASAHFGAYVCGTDIDYNTVHGLGKASRKNQKWRGPDENIRANLRQYGLEKFYLDVLVSDASKPSWRKGTYFDAIITDPPYGIRESTRRTGSQKEILKGIEKCPESHVPVSLTYHLSDMFLDLINFAAETLVLGGRLVYWLPVYTPEYTEKMVPWHPCLRLVSNCEQKLSSHTARRLITMEKVKEFENPDEYSRLLSDHFLPYQGHNSFREKYFSGVTKRIATEEQCSHEGKL</sequence>
<accession>Q7TNK6</accession>
<protein>
    <recommendedName>
        <fullName evidence="1">tRNA (guanine(10)-N(2))-methyltransferase TRMT11</fullName>
        <ecNumber evidence="1">2.1.1.214</ecNumber>
    </recommendedName>
    <alternativeName>
        <fullName evidence="3">tRNA methyltransferase 11 homolog</fullName>
    </alternativeName>
</protein>
<organism>
    <name type="scientific">Rattus norvegicus</name>
    <name type="common">Rat</name>
    <dbReference type="NCBI Taxonomy" id="10116"/>
    <lineage>
        <taxon>Eukaryota</taxon>
        <taxon>Metazoa</taxon>
        <taxon>Chordata</taxon>
        <taxon>Craniata</taxon>
        <taxon>Vertebrata</taxon>
        <taxon>Euteleostomi</taxon>
        <taxon>Mammalia</taxon>
        <taxon>Eutheria</taxon>
        <taxon>Euarchontoglires</taxon>
        <taxon>Glires</taxon>
        <taxon>Rodentia</taxon>
        <taxon>Myomorpha</taxon>
        <taxon>Muroidea</taxon>
        <taxon>Muridae</taxon>
        <taxon>Murinae</taxon>
        <taxon>Rattus</taxon>
    </lineage>
</organism>
<feature type="initiator methionine" description="Removed" evidence="1">
    <location>
        <position position="1"/>
    </location>
</feature>
<feature type="chain" id="PRO_0000230291" description="tRNA (guanine(10)-N(2))-methyltransferase TRMT11">
    <location>
        <begin position="2"/>
        <end position="463"/>
    </location>
</feature>
<feature type="modified residue" description="N-acetylalanine" evidence="1">
    <location>
        <position position="2"/>
    </location>
</feature>
<evidence type="ECO:0000250" key="1">
    <source>
        <dbReference type="UniProtKB" id="Q7Z4G4"/>
    </source>
</evidence>
<evidence type="ECO:0000255" key="2">
    <source>
        <dbReference type="PROSITE-ProRule" id="PRU00959"/>
    </source>
</evidence>
<evidence type="ECO:0000312" key="3">
    <source>
        <dbReference type="RGD" id="727798"/>
    </source>
</evidence>
<gene>
    <name evidence="3" type="primary">Trmt11</name>
</gene>
<proteinExistence type="evidence at transcript level"/>